<keyword id="KW-0067">ATP-binding</keyword>
<keyword id="KW-0963">Cytoplasm</keyword>
<keyword id="KW-0227">DNA damage</keyword>
<keyword id="KW-0233">DNA recombination</keyword>
<keyword id="KW-0234">DNA repair</keyword>
<keyword id="KW-0238">DNA-binding</keyword>
<keyword id="KW-0378">Hydrolase</keyword>
<keyword id="KW-0547">Nucleotide-binding</keyword>
<evidence type="ECO:0000255" key="1">
    <source>
        <dbReference type="HAMAP-Rule" id="MF_00016"/>
    </source>
</evidence>
<name>RUVB_RICAE</name>
<proteinExistence type="inferred from homology"/>
<feature type="chain" id="PRO_1000201845" description="Holliday junction branch migration complex subunit RuvB">
    <location>
        <begin position="1"/>
        <end position="342"/>
    </location>
</feature>
<feature type="region of interest" description="Large ATPase domain (RuvB-L)" evidence="1">
    <location>
        <begin position="1"/>
        <end position="179"/>
    </location>
</feature>
<feature type="region of interest" description="Small ATPAse domain (RuvB-S)" evidence="1">
    <location>
        <begin position="180"/>
        <end position="250"/>
    </location>
</feature>
<feature type="region of interest" description="Head domain (RuvB-H)" evidence="1">
    <location>
        <begin position="253"/>
        <end position="342"/>
    </location>
</feature>
<feature type="binding site" evidence="1">
    <location>
        <position position="18"/>
    </location>
    <ligand>
        <name>ATP</name>
        <dbReference type="ChEBI" id="CHEBI:30616"/>
    </ligand>
</feature>
<feature type="binding site" evidence="1">
    <location>
        <position position="19"/>
    </location>
    <ligand>
        <name>ATP</name>
        <dbReference type="ChEBI" id="CHEBI:30616"/>
    </ligand>
</feature>
<feature type="binding site" evidence="1">
    <location>
        <position position="60"/>
    </location>
    <ligand>
        <name>ATP</name>
        <dbReference type="ChEBI" id="CHEBI:30616"/>
    </ligand>
</feature>
<feature type="binding site" evidence="1">
    <location>
        <position position="63"/>
    </location>
    <ligand>
        <name>ATP</name>
        <dbReference type="ChEBI" id="CHEBI:30616"/>
    </ligand>
</feature>
<feature type="binding site" evidence="1">
    <location>
        <position position="64"/>
    </location>
    <ligand>
        <name>ATP</name>
        <dbReference type="ChEBI" id="CHEBI:30616"/>
    </ligand>
</feature>
<feature type="binding site" evidence="1">
    <location>
        <position position="64"/>
    </location>
    <ligand>
        <name>Mg(2+)</name>
        <dbReference type="ChEBI" id="CHEBI:18420"/>
    </ligand>
</feature>
<feature type="binding site" evidence="1">
    <location>
        <position position="65"/>
    </location>
    <ligand>
        <name>ATP</name>
        <dbReference type="ChEBI" id="CHEBI:30616"/>
    </ligand>
</feature>
<feature type="binding site" evidence="1">
    <location>
        <begin position="126"/>
        <end position="128"/>
    </location>
    <ligand>
        <name>ATP</name>
        <dbReference type="ChEBI" id="CHEBI:30616"/>
    </ligand>
</feature>
<feature type="binding site" evidence="1">
    <location>
        <position position="169"/>
    </location>
    <ligand>
        <name>ATP</name>
        <dbReference type="ChEBI" id="CHEBI:30616"/>
    </ligand>
</feature>
<feature type="binding site" evidence="1">
    <location>
        <position position="179"/>
    </location>
    <ligand>
        <name>ATP</name>
        <dbReference type="ChEBI" id="CHEBI:30616"/>
    </ligand>
</feature>
<feature type="binding site" evidence="1">
    <location>
        <position position="216"/>
    </location>
    <ligand>
        <name>ATP</name>
        <dbReference type="ChEBI" id="CHEBI:30616"/>
    </ligand>
</feature>
<feature type="binding site" evidence="1">
    <location>
        <position position="289"/>
    </location>
    <ligand>
        <name>DNA</name>
        <dbReference type="ChEBI" id="CHEBI:16991"/>
    </ligand>
</feature>
<feature type="binding site" evidence="1">
    <location>
        <position position="308"/>
    </location>
    <ligand>
        <name>DNA</name>
        <dbReference type="ChEBI" id="CHEBI:16991"/>
    </ligand>
</feature>
<feature type="binding site" evidence="1">
    <location>
        <position position="313"/>
    </location>
    <ligand>
        <name>DNA</name>
        <dbReference type="ChEBI" id="CHEBI:16991"/>
    </ligand>
</feature>
<organism>
    <name type="scientific">Rickettsia africae (strain ESF-5)</name>
    <dbReference type="NCBI Taxonomy" id="347255"/>
    <lineage>
        <taxon>Bacteria</taxon>
        <taxon>Pseudomonadati</taxon>
        <taxon>Pseudomonadota</taxon>
        <taxon>Alphaproteobacteria</taxon>
        <taxon>Rickettsiales</taxon>
        <taxon>Rickettsiaceae</taxon>
        <taxon>Rickettsieae</taxon>
        <taxon>Rickettsia</taxon>
        <taxon>spotted fever group</taxon>
    </lineage>
</organism>
<accession>C3PNA6</accession>
<reference key="1">
    <citation type="journal article" date="2009" name="BMC Genomics">
        <title>Analysis of the Rickettsia africae genome reveals that virulence acquisition in Rickettsia species may be explained by genome reduction.</title>
        <authorList>
            <person name="Fournier P.-E."/>
            <person name="El Karkouri K."/>
            <person name="Leroy Q."/>
            <person name="Robert C."/>
            <person name="Giumelli B."/>
            <person name="Renesto P."/>
            <person name="Socolovschi C."/>
            <person name="Parola P."/>
            <person name="Audic S."/>
            <person name="Raoult D."/>
        </authorList>
    </citation>
    <scope>NUCLEOTIDE SEQUENCE [LARGE SCALE GENOMIC DNA]</scope>
    <source>
        <strain>ESF-5</strain>
    </source>
</reference>
<comment type="function">
    <text evidence="1">The RuvA-RuvB-RuvC complex processes Holliday junction (HJ) DNA during genetic recombination and DNA repair, while the RuvA-RuvB complex plays an important role in the rescue of blocked DNA replication forks via replication fork reversal (RFR). RuvA specifically binds to HJ cruciform DNA, conferring on it an open structure. The RuvB hexamer acts as an ATP-dependent pump, pulling dsDNA into and through the RuvAB complex. RuvB forms 2 homohexamers on either side of HJ DNA bound by 1 or 2 RuvA tetramers; 4 subunits per hexamer contact DNA at a time. Coordinated motions by a converter formed by DNA-disengaged RuvB subunits stimulates ATP hydrolysis and nucleotide exchange. Immobilization of the converter enables RuvB to convert the ATP-contained energy into a lever motion, pulling 2 nucleotides of DNA out of the RuvA tetramer per ATP hydrolyzed, thus driving DNA branch migration. The RuvB motors rotate together with the DNA substrate, which together with the progressing nucleotide cycle form the mechanistic basis for DNA recombination by continuous HJ branch migration. Branch migration allows RuvC to scan DNA until it finds its consensus sequence, where it cleaves and resolves cruciform DNA.</text>
</comment>
<comment type="catalytic activity">
    <reaction evidence="1">
        <text>ATP + H2O = ADP + phosphate + H(+)</text>
        <dbReference type="Rhea" id="RHEA:13065"/>
        <dbReference type="ChEBI" id="CHEBI:15377"/>
        <dbReference type="ChEBI" id="CHEBI:15378"/>
        <dbReference type="ChEBI" id="CHEBI:30616"/>
        <dbReference type="ChEBI" id="CHEBI:43474"/>
        <dbReference type="ChEBI" id="CHEBI:456216"/>
    </reaction>
</comment>
<comment type="subunit">
    <text evidence="1">Homohexamer. Forms an RuvA(8)-RuvB(12)-Holliday junction (HJ) complex. HJ DNA is sandwiched between 2 RuvA tetramers; dsDNA enters through RuvA and exits via RuvB. An RuvB hexamer assembles on each DNA strand where it exits the tetramer. Each RuvB hexamer is contacted by two RuvA subunits (via domain III) on 2 adjacent RuvB subunits; this complex drives branch migration. In the full resolvosome a probable DNA-RuvA(4)-RuvB(12)-RuvC(2) complex forms which resolves the HJ.</text>
</comment>
<comment type="subcellular location">
    <subcellularLocation>
        <location evidence="1">Cytoplasm</location>
    </subcellularLocation>
</comment>
<comment type="domain">
    <text evidence="1">Has 3 domains, the large (RuvB-L) and small ATPase (RuvB-S) domains and the C-terminal head (RuvB-H) domain. The head domain binds DNA, while the ATPase domains jointly bind ATP, ADP or are empty depending on the state of the subunit in the translocation cycle. During a single DNA translocation step the structure of each domain remains the same, but their relative positions change.</text>
</comment>
<comment type="similarity">
    <text evidence="1">Belongs to the RuvB family.</text>
</comment>
<gene>
    <name evidence="1" type="primary">ruvB</name>
    <name type="ordered locus">RAF_ORF0495</name>
</gene>
<dbReference type="EC" id="3.6.4.-" evidence="1"/>
<dbReference type="EMBL" id="CP001612">
    <property type="protein sequence ID" value="ACP53416.1"/>
    <property type="molecule type" value="Genomic_DNA"/>
</dbReference>
<dbReference type="RefSeq" id="WP_012719643.1">
    <property type="nucleotide sequence ID" value="NC_012633.1"/>
</dbReference>
<dbReference type="SMR" id="C3PNA6"/>
<dbReference type="KEGG" id="raf:RAF_ORF0495"/>
<dbReference type="HOGENOM" id="CLU_055599_1_0_5"/>
<dbReference type="Proteomes" id="UP000002305">
    <property type="component" value="Chromosome"/>
</dbReference>
<dbReference type="GO" id="GO:0005737">
    <property type="term" value="C:cytoplasm"/>
    <property type="evidence" value="ECO:0007669"/>
    <property type="project" value="UniProtKB-SubCell"/>
</dbReference>
<dbReference type="GO" id="GO:0048476">
    <property type="term" value="C:Holliday junction resolvase complex"/>
    <property type="evidence" value="ECO:0007669"/>
    <property type="project" value="UniProtKB-UniRule"/>
</dbReference>
<dbReference type="GO" id="GO:0005524">
    <property type="term" value="F:ATP binding"/>
    <property type="evidence" value="ECO:0007669"/>
    <property type="project" value="UniProtKB-UniRule"/>
</dbReference>
<dbReference type="GO" id="GO:0016887">
    <property type="term" value="F:ATP hydrolysis activity"/>
    <property type="evidence" value="ECO:0007669"/>
    <property type="project" value="InterPro"/>
</dbReference>
<dbReference type="GO" id="GO:0000400">
    <property type="term" value="F:four-way junction DNA binding"/>
    <property type="evidence" value="ECO:0007669"/>
    <property type="project" value="UniProtKB-UniRule"/>
</dbReference>
<dbReference type="GO" id="GO:0009378">
    <property type="term" value="F:four-way junction helicase activity"/>
    <property type="evidence" value="ECO:0007669"/>
    <property type="project" value="InterPro"/>
</dbReference>
<dbReference type="GO" id="GO:0006310">
    <property type="term" value="P:DNA recombination"/>
    <property type="evidence" value="ECO:0007669"/>
    <property type="project" value="UniProtKB-UniRule"/>
</dbReference>
<dbReference type="GO" id="GO:0006281">
    <property type="term" value="P:DNA repair"/>
    <property type="evidence" value="ECO:0007669"/>
    <property type="project" value="UniProtKB-UniRule"/>
</dbReference>
<dbReference type="CDD" id="cd00009">
    <property type="entry name" value="AAA"/>
    <property type="match status" value="1"/>
</dbReference>
<dbReference type="Gene3D" id="1.10.8.60">
    <property type="match status" value="1"/>
</dbReference>
<dbReference type="Gene3D" id="3.40.50.300">
    <property type="entry name" value="P-loop containing nucleotide triphosphate hydrolases"/>
    <property type="match status" value="1"/>
</dbReference>
<dbReference type="Gene3D" id="1.10.10.10">
    <property type="entry name" value="Winged helix-like DNA-binding domain superfamily/Winged helix DNA-binding domain"/>
    <property type="match status" value="1"/>
</dbReference>
<dbReference type="HAMAP" id="MF_00016">
    <property type="entry name" value="DNA_HJ_migration_RuvB"/>
    <property type="match status" value="1"/>
</dbReference>
<dbReference type="InterPro" id="IPR003593">
    <property type="entry name" value="AAA+_ATPase"/>
</dbReference>
<dbReference type="InterPro" id="IPR041445">
    <property type="entry name" value="AAA_lid_4"/>
</dbReference>
<dbReference type="InterPro" id="IPR004605">
    <property type="entry name" value="DNA_helicase_Holl-junc_RuvB"/>
</dbReference>
<dbReference type="InterPro" id="IPR027417">
    <property type="entry name" value="P-loop_NTPase"/>
</dbReference>
<dbReference type="InterPro" id="IPR008824">
    <property type="entry name" value="RuvB-like_N"/>
</dbReference>
<dbReference type="InterPro" id="IPR008823">
    <property type="entry name" value="RuvB_C"/>
</dbReference>
<dbReference type="InterPro" id="IPR036388">
    <property type="entry name" value="WH-like_DNA-bd_sf"/>
</dbReference>
<dbReference type="InterPro" id="IPR036390">
    <property type="entry name" value="WH_DNA-bd_sf"/>
</dbReference>
<dbReference type="NCBIfam" id="NF000868">
    <property type="entry name" value="PRK00080.1"/>
    <property type="match status" value="1"/>
</dbReference>
<dbReference type="NCBIfam" id="TIGR00635">
    <property type="entry name" value="ruvB"/>
    <property type="match status" value="1"/>
</dbReference>
<dbReference type="PANTHER" id="PTHR42848">
    <property type="match status" value="1"/>
</dbReference>
<dbReference type="PANTHER" id="PTHR42848:SF1">
    <property type="entry name" value="HOLLIDAY JUNCTION BRANCH MIGRATION COMPLEX SUBUNIT RUVB"/>
    <property type="match status" value="1"/>
</dbReference>
<dbReference type="Pfam" id="PF17864">
    <property type="entry name" value="AAA_lid_4"/>
    <property type="match status" value="1"/>
</dbReference>
<dbReference type="Pfam" id="PF05491">
    <property type="entry name" value="RuvB_C"/>
    <property type="match status" value="1"/>
</dbReference>
<dbReference type="Pfam" id="PF05496">
    <property type="entry name" value="RuvB_N"/>
    <property type="match status" value="1"/>
</dbReference>
<dbReference type="SMART" id="SM00382">
    <property type="entry name" value="AAA"/>
    <property type="match status" value="1"/>
</dbReference>
<dbReference type="SUPFAM" id="SSF52540">
    <property type="entry name" value="P-loop containing nucleoside triphosphate hydrolases"/>
    <property type="match status" value="1"/>
</dbReference>
<dbReference type="SUPFAM" id="SSF46785">
    <property type="entry name" value="Winged helix' DNA-binding domain"/>
    <property type="match status" value="1"/>
</dbReference>
<sequence length="342" mass="38343">MTNILSPEKSENDQELPIRPSYLQEFVGQQQIKENLSVFIKAAKSRNEHLDHTLFYGPPGLGKTTLAKIISNEIGGNFKSTSGPAILKVADLAAILTNLEKNDVLFIDEIHRLNTAIEEVLYPAMEDFELDIIIGEGSAARSVKITLPKFTLIGATTRLGLLSNPLRDRFGIPMRLNFYNTEELKKVLNRASKLLDIDLTDSGSEEIAKRSRGTPRIALRLLRRIRDFAAVDGKSRVDKEISDFGLNRLEVDCIGLDSNDYRYLKFIADNYNGGPVGIETIAAALSEQRDALEETIEPYLIQIGLLQRTPRGRVITIAAFEHLKMPVPNQSHHQFNIFNENE</sequence>
<protein>
    <recommendedName>
        <fullName evidence="1">Holliday junction branch migration complex subunit RuvB</fullName>
        <ecNumber evidence="1">3.6.4.-</ecNumber>
    </recommendedName>
</protein>